<evidence type="ECO:0000250" key="1"/>
<evidence type="ECO:0000255" key="2"/>
<evidence type="ECO:0000305" key="3"/>
<feature type="chain" id="PRO_0000246265" description="GPI mannosyltransferase 3">
    <location>
        <begin position="1"/>
        <end position="601"/>
    </location>
</feature>
<feature type="transmembrane region" description="Helical" evidence="2">
    <location>
        <begin position="66"/>
        <end position="86"/>
    </location>
</feature>
<feature type="transmembrane region" description="Helical" evidence="2">
    <location>
        <begin position="133"/>
        <end position="153"/>
    </location>
</feature>
<feature type="transmembrane region" description="Helical" evidence="2">
    <location>
        <begin position="176"/>
        <end position="196"/>
    </location>
</feature>
<feature type="transmembrane region" description="Helical" evidence="2">
    <location>
        <begin position="243"/>
        <end position="263"/>
    </location>
</feature>
<feature type="transmembrane region" description="Helical" evidence="2">
    <location>
        <begin position="270"/>
        <end position="290"/>
    </location>
</feature>
<feature type="transmembrane region" description="Helical" evidence="2">
    <location>
        <begin position="327"/>
        <end position="347"/>
    </location>
</feature>
<feature type="transmembrane region" description="Helical" evidence="2">
    <location>
        <begin position="360"/>
        <end position="380"/>
    </location>
</feature>
<feature type="transmembrane region" description="Helical" evidence="2">
    <location>
        <begin position="387"/>
        <end position="407"/>
    </location>
</feature>
<feature type="transmembrane region" description="Helical" evidence="2">
    <location>
        <begin position="421"/>
        <end position="441"/>
    </location>
</feature>
<feature type="glycosylation site" description="N-linked (GlcNAc...) asparagine" evidence="2">
    <location>
        <position position="309"/>
    </location>
</feature>
<feature type="glycosylation site" description="N-linked (GlcNAc...) asparagine" evidence="2">
    <location>
        <position position="521"/>
    </location>
</feature>
<protein>
    <recommendedName>
        <fullName>GPI mannosyltransferase 3</fullName>
        <ecNumber>2.4.1.-</ecNumber>
    </recommendedName>
    <alternativeName>
        <fullName>GPI mannosyltransferase III</fullName>
        <shortName>GPI-MT-III</shortName>
    </alternativeName>
    <alternativeName>
        <fullName>Glycosylphosphatidylinositol-anchor biosynthesis protein 10</fullName>
    </alternativeName>
</protein>
<name>GPI10_KLULA</name>
<proteinExistence type="inferred from homology"/>
<keyword id="KW-0256">Endoplasmic reticulum</keyword>
<keyword id="KW-0325">Glycoprotein</keyword>
<keyword id="KW-0328">Glycosyltransferase</keyword>
<keyword id="KW-0337">GPI-anchor biosynthesis</keyword>
<keyword id="KW-0472">Membrane</keyword>
<keyword id="KW-1185">Reference proteome</keyword>
<keyword id="KW-0808">Transferase</keyword>
<keyword id="KW-0812">Transmembrane</keyword>
<keyword id="KW-1133">Transmembrane helix</keyword>
<organism>
    <name type="scientific">Kluyveromyces lactis (strain ATCC 8585 / CBS 2359 / DSM 70799 / NBRC 1267 / NRRL Y-1140 / WM37)</name>
    <name type="common">Yeast</name>
    <name type="synonym">Candida sphaerica</name>
    <dbReference type="NCBI Taxonomy" id="284590"/>
    <lineage>
        <taxon>Eukaryota</taxon>
        <taxon>Fungi</taxon>
        <taxon>Dikarya</taxon>
        <taxon>Ascomycota</taxon>
        <taxon>Saccharomycotina</taxon>
        <taxon>Saccharomycetes</taxon>
        <taxon>Saccharomycetales</taxon>
        <taxon>Saccharomycetaceae</taxon>
        <taxon>Kluyveromyces</taxon>
    </lineage>
</organism>
<accession>Q6CN76</accession>
<sequence length="601" mass="70166">MSNQVPLKRLFKVILVIRCVQALLTRTFFQADEFWQSLEPAHYMAFGYGELTWEWSFGLRSYAFPLIFQIGYTLVKYAAISCELIVQTATDWVLLFVANVIPNSEFGWEMVQEMRSFPEEIRGFIEYQGVIYAPKLIMAVLAAIGEFHVILLAEKLYKLTMDKSDDSKGSDKKHSTVINFTLVATVSNFFNCFFITRSFINSFEMILTSVSLYYWDWTSGEHIESFDFLKSLIIGTFTVLQRPTNAFIWLILGGYMILNLVLSKRWRKLFSLLIKVICASFISISTNLCIDYYFYGYITIPVLKFIKFNCTSSLSKFYGVAPWNFHVFQSLPIVAGYSLPLLIHSFFCSLTKKRFLSPLVNPFLQIKTVVLLNVILYSLIPHKEFRFIYPLQPFFIILSVFDGIWLLQKYGSTATTRTMEFFSQVMWILPVVSMVASMLLSTLHESGTVAVMDYLHSIRNIDSIGFIMPCHSTPWQSHFHRNDVKELWAITCSPPLHLLTDPDANAKLPFYMDESDYLYDNISKFMYQHFPPVFRKSLRSPGKQYTYEWPEYLVIFEDLDSQFMNDYLVDSMYIEETRFFNSLVHWDKRRSGDIIIYHKMP</sequence>
<reference key="1">
    <citation type="journal article" date="2004" name="Nature">
        <title>Genome evolution in yeasts.</title>
        <authorList>
            <person name="Dujon B."/>
            <person name="Sherman D."/>
            <person name="Fischer G."/>
            <person name="Durrens P."/>
            <person name="Casaregola S."/>
            <person name="Lafontaine I."/>
            <person name="de Montigny J."/>
            <person name="Marck C."/>
            <person name="Neuveglise C."/>
            <person name="Talla E."/>
            <person name="Goffard N."/>
            <person name="Frangeul L."/>
            <person name="Aigle M."/>
            <person name="Anthouard V."/>
            <person name="Babour A."/>
            <person name="Barbe V."/>
            <person name="Barnay S."/>
            <person name="Blanchin S."/>
            <person name="Beckerich J.-M."/>
            <person name="Beyne E."/>
            <person name="Bleykasten C."/>
            <person name="Boisrame A."/>
            <person name="Boyer J."/>
            <person name="Cattolico L."/>
            <person name="Confanioleri F."/>
            <person name="de Daruvar A."/>
            <person name="Despons L."/>
            <person name="Fabre E."/>
            <person name="Fairhead C."/>
            <person name="Ferry-Dumazet H."/>
            <person name="Groppi A."/>
            <person name="Hantraye F."/>
            <person name="Hennequin C."/>
            <person name="Jauniaux N."/>
            <person name="Joyet P."/>
            <person name="Kachouri R."/>
            <person name="Kerrest A."/>
            <person name="Koszul R."/>
            <person name="Lemaire M."/>
            <person name="Lesur I."/>
            <person name="Ma L."/>
            <person name="Muller H."/>
            <person name="Nicaud J.-M."/>
            <person name="Nikolski M."/>
            <person name="Oztas S."/>
            <person name="Ozier-Kalogeropoulos O."/>
            <person name="Pellenz S."/>
            <person name="Potier S."/>
            <person name="Richard G.-F."/>
            <person name="Straub M.-L."/>
            <person name="Suleau A."/>
            <person name="Swennen D."/>
            <person name="Tekaia F."/>
            <person name="Wesolowski-Louvel M."/>
            <person name="Westhof E."/>
            <person name="Wirth B."/>
            <person name="Zeniou-Meyer M."/>
            <person name="Zivanovic Y."/>
            <person name="Bolotin-Fukuhara M."/>
            <person name="Thierry A."/>
            <person name="Bouchier C."/>
            <person name="Caudron B."/>
            <person name="Scarpelli C."/>
            <person name="Gaillardin C."/>
            <person name="Weissenbach J."/>
            <person name="Wincker P."/>
            <person name="Souciet J.-L."/>
        </authorList>
    </citation>
    <scope>NUCLEOTIDE SEQUENCE [LARGE SCALE GENOMIC DNA]</scope>
    <source>
        <strain>ATCC 8585 / CBS 2359 / DSM 70799 / NBRC 1267 / NRRL Y-1140 / WM37</strain>
    </source>
</reference>
<comment type="function">
    <text evidence="1">Mannosyltransferase involved in glycosylphosphatidylinositol-anchor biosynthesis. Transfers the third mannose to Man2-GlcN-acyl-PI during GPI precursor assembly (By similarity).</text>
</comment>
<comment type="pathway">
    <text>Glycolipid biosynthesis; glycosylphosphatidylinositol-anchor biosynthesis.</text>
</comment>
<comment type="subcellular location">
    <subcellularLocation>
        <location evidence="1">Endoplasmic reticulum membrane</location>
        <topology evidence="1">Multi-pass membrane protein</topology>
    </subcellularLocation>
</comment>
<comment type="similarity">
    <text evidence="3">Belongs to the glycosyltransferase 22 family. PIGB subfamily.</text>
</comment>
<dbReference type="EC" id="2.4.1.-"/>
<dbReference type="EMBL" id="CR382125">
    <property type="protein sequence ID" value="CAG99700.1"/>
    <property type="molecule type" value="Genomic_DNA"/>
</dbReference>
<dbReference type="RefSeq" id="XP_454613.1">
    <property type="nucleotide sequence ID" value="XM_454613.1"/>
</dbReference>
<dbReference type="FunCoup" id="Q6CN76">
    <property type="interactions" value="896"/>
</dbReference>
<dbReference type="STRING" id="284590.Q6CN76"/>
<dbReference type="CAZy" id="GT22">
    <property type="family name" value="Glycosyltransferase Family 22"/>
</dbReference>
<dbReference type="GlyCosmos" id="Q6CN76">
    <property type="glycosylation" value="2 sites, No reported glycans"/>
</dbReference>
<dbReference type="PaxDb" id="284590-Q6CN76"/>
<dbReference type="KEGG" id="kla:KLLA0_E14719g"/>
<dbReference type="eggNOG" id="KOG1771">
    <property type="taxonomic scope" value="Eukaryota"/>
</dbReference>
<dbReference type="HOGENOM" id="CLU_012353_2_0_1"/>
<dbReference type="InParanoid" id="Q6CN76"/>
<dbReference type="OMA" id="HEWPDYL"/>
<dbReference type="UniPathway" id="UPA00196"/>
<dbReference type="Proteomes" id="UP000000598">
    <property type="component" value="Chromosome E"/>
</dbReference>
<dbReference type="GO" id="GO:0005789">
    <property type="term" value="C:endoplasmic reticulum membrane"/>
    <property type="evidence" value="ECO:0007669"/>
    <property type="project" value="UniProtKB-SubCell"/>
</dbReference>
<dbReference type="GO" id="GO:0000026">
    <property type="term" value="F:alpha-1,2-mannosyltransferase activity"/>
    <property type="evidence" value="ECO:0007669"/>
    <property type="project" value="TreeGrafter"/>
</dbReference>
<dbReference type="GO" id="GO:0006506">
    <property type="term" value="P:GPI anchor biosynthetic process"/>
    <property type="evidence" value="ECO:0007669"/>
    <property type="project" value="UniProtKB-UniPathway"/>
</dbReference>
<dbReference type="InterPro" id="IPR005599">
    <property type="entry name" value="GPI_mannosylTrfase"/>
</dbReference>
<dbReference type="PANTHER" id="PTHR22760">
    <property type="entry name" value="GLYCOSYLTRANSFERASE"/>
    <property type="match status" value="1"/>
</dbReference>
<dbReference type="PANTHER" id="PTHR22760:SF4">
    <property type="entry name" value="GPI MANNOSYLTRANSFERASE 3"/>
    <property type="match status" value="1"/>
</dbReference>
<dbReference type="Pfam" id="PF03901">
    <property type="entry name" value="Glyco_transf_22"/>
    <property type="match status" value="1"/>
</dbReference>
<gene>
    <name type="primary">GPI10</name>
    <name type="ordered locus">KLLA0E14762g</name>
</gene>